<dbReference type="EMBL" id="AM286415">
    <property type="protein sequence ID" value="CAL11659.1"/>
    <property type="molecule type" value="Genomic_DNA"/>
</dbReference>
<dbReference type="RefSeq" id="WP_005170875.1">
    <property type="nucleotide sequence ID" value="NC_008800.1"/>
</dbReference>
<dbReference type="RefSeq" id="YP_001005875.1">
    <property type="nucleotide sequence ID" value="NC_008800.1"/>
</dbReference>
<dbReference type="SMR" id="A1JMT8"/>
<dbReference type="KEGG" id="yen:YE1582"/>
<dbReference type="PATRIC" id="fig|393305.7.peg.1711"/>
<dbReference type="eggNOG" id="COG5404">
    <property type="taxonomic scope" value="Bacteria"/>
</dbReference>
<dbReference type="HOGENOM" id="CLU_118972_1_0_6"/>
<dbReference type="OrthoDB" id="6464784at2"/>
<dbReference type="Proteomes" id="UP000000642">
    <property type="component" value="Chromosome"/>
</dbReference>
<dbReference type="GO" id="GO:0000917">
    <property type="term" value="P:division septum assembly"/>
    <property type="evidence" value="ECO:0007669"/>
    <property type="project" value="UniProtKB-KW"/>
</dbReference>
<dbReference type="GO" id="GO:0006281">
    <property type="term" value="P:DNA repair"/>
    <property type="evidence" value="ECO:0007669"/>
    <property type="project" value="TreeGrafter"/>
</dbReference>
<dbReference type="GO" id="GO:0051782">
    <property type="term" value="P:negative regulation of cell division"/>
    <property type="evidence" value="ECO:0007669"/>
    <property type="project" value="UniProtKB-UniRule"/>
</dbReference>
<dbReference type="GO" id="GO:0009432">
    <property type="term" value="P:SOS response"/>
    <property type="evidence" value="ECO:0007669"/>
    <property type="project" value="UniProtKB-UniRule"/>
</dbReference>
<dbReference type="Gene3D" id="3.40.50.300">
    <property type="entry name" value="P-loop containing nucleotide triphosphate hydrolases"/>
    <property type="match status" value="1"/>
</dbReference>
<dbReference type="HAMAP" id="MF_01179">
    <property type="entry name" value="SulA"/>
    <property type="match status" value="1"/>
</dbReference>
<dbReference type="InterPro" id="IPR004596">
    <property type="entry name" value="Cell_div_suppressor_SulA"/>
</dbReference>
<dbReference type="InterPro" id="IPR027417">
    <property type="entry name" value="P-loop_NTPase"/>
</dbReference>
<dbReference type="InterPro" id="IPR050356">
    <property type="entry name" value="SulA_CellDiv_inhibitor"/>
</dbReference>
<dbReference type="InterPro" id="IPR047696">
    <property type="entry name" value="SulA_enterobact"/>
</dbReference>
<dbReference type="NCBIfam" id="NF007892">
    <property type="entry name" value="PRK10595.1"/>
    <property type="match status" value="1"/>
</dbReference>
<dbReference type="NCBIfam" id="TIGR00623">
    <property type="entry name" value="SOS_SulA_coli"/>
    <property type="match status" value="1"/>
</dbReference>
<dbReference type="PANTHER" id="PTHR35369">
    <property type="entry name" value="BLR3025 PROTEIN-RELATED"/>
    <property type="match status" value="1"/>
</dbReference>
<dbReference type="PANTHER" id="PTHR35369:SF4">
    <property type="entry name" value="CELL DIVISION INHIBITOR SULA"/>
    <property type="match status" value="1"/>
</dbReference>
<dbReference type="Pfam" id="PF03846">
    <property type="entry name" value="SulA"/>
    <property type="match status" value="1"/>
</dbReference>
<dbReference type="PIRSF" id="PIRSF003093">
    <property type="entry name" value="SulA"/>
    <property type="match status" value="1"/>
</dbReference>
<dbReference type="SUPFAM" id="SSF52540">
    <property type="entry name" value="P-loop containing nucleoside triphosphate hydrolases"/>
    <property type="match status" value="1"/>
</dbReference>
<keyword id="KW-0131">Cell cycle</keyword>
<keyword id="KW-0132">Cell division</keyword>
<keyword id="KW-0227">DNA damage</keyword>
<keyword id="KW-0717">Septation</keyword>
<keyword id="KW-0742">SOS response</keyword>
<evidence type="ECO:0000255" key="1">
    <source>
        <dbReference type="HAMAP-Rule" id="MF_01179"/>
    </source>
</evidence>
<name>SULA_YERE8</name>
<reference key="1">
    <citation type="journal article" date="2006" name="PLoS Genet.">
        <title>The complete genome sequence and comparative genome analysis of the high pathogenicity Yersinia enterocolitica strain 8081.</title>
        <authorList>
            <person name="Thomson N.R."/>
            <person name="Howard S."/>
            <person name="Wren B.W."/>
            <person name="Holden M.T.G."/>
            <person name="Crossman L."/>
            <person name="Challis G.L."/>
            <person name="Churcher C."/>
            <person name="Mungall K."/>
            <person name="Brooks K."/>
            <person name="Chillingworth T."/>
            <person name="Feltwell T."/>
            <person name="Abdellah Z."/>
            <person name="Hauser H."/>
            <person name="Jagels K."/>
            <person name="Maddison M."/>
            <person name="Moule S."/>
            <person name="Sanders M."/>
            <person name="Whitehead S."/>
            <person name="Quail M.A."/>
            <person name="Dougan G."/>
            <person name="Parkhill J."/>
            <person name="Prentice M.B."/>
        </authorList>
    </citation>
    <scope>NUCLEOTIDE SEQUENCE [LARGE SCALE GENOMIC DNA]</scope>
    <source>
        <strain>NCTC 13174 / 8081</strain>
    </source>
</reference>
<sequence>MRTQSLKPYNANYHSLITRDAQERVDAPTDSGLISELVYSENQPAVAQLLLPLLQQLGKQSRWLLWLTPQQKLSRLWLQQSGLPMSKVVQARQINPLSTVDAMEKALLTGNYSVVLGWLPELSENDRIRLRMAAKLGNAYGFVMRPLNETKLDQGQCATLKIHSSLYH</sequence>
<organism>
    <name type="scientific">Yersinia enterocolitica serotype O:8 / biotype 1B (strain NCTC 13174 / 8081)</name>
    <dbReference type="NCBI Taxonomy" id="393305"/>
    <lineage>
        <taxon>Bacteria</taxon>
        <taxon>Pseudomonadati</taxon>
        <taxon>Pseudomonadota</taxon>
        <taxon>Gammaproteobacteria</taxon>
        <taxon>Enterobacterales</taxon>
        <taxon>Yersiniaceae</taxon>
        <taxon>Yersinia</taxon>
    </lineage>
</organism>
<proteinExistence type="inferred from homology"/>
<accession>A1JMT8</accession>
<comment type="function">
    <text evidence="1">Component of the SOS system and an inhibitor of cell division. Accumulation of SulA causes rapid cessation of cell division and the appearance of long, non-septate filaments. In the presence of GTP, binds a polymerization-competent form of FtsZ in a 1:1 ratio, thus inhibiting FtsZ polymerization and therefore preventing it from participating in the assembly of the Z ring. This mechanism prevents the premature segregation of damaged DNA to daughter cells during cell division.</text>
</comment>
<comment type="subunit">
    <text evidence="1">Interacts with FtsZ.</text>
</comment>
<comment type="induction">
    <text evidence="1">By DNA damage, as part of the SOS response.</text>
</comment>
<comment type="PTM">
    <text evidence="1">Is rapidly cleaved and degraded by the Lon protease once DNA damage is repaired.</text>
</comment>
<comment type="similarity">
    <text evidence="1">Belongs to the SulA family.</text>
</comment>
<protein>
    <recommendedName>
        <fullName evidence="1">Cell division inhibitor SulA</fullName>
    </recommendedName>
</protein>
<feature type="chain" id="PRO_0000343979" description="Cell division inhibitor SulA">
    <location>
        <begin position="1"/>
        <end position="168"/>
    </location>
</feature>
<feature type="region of interest" description="FtsZ binding" evidence="1">
    <location>
        <begin position="106"/>
        <end position="112"/>
    </location>
</feature>
<feature type="region of interest" description="Lon protease binding" evidence="1">
    <location>
        <begin position="161"/>
        <end position="168"/>
    </location>
</feature>
<feature type="site" description="Essential for degradation by Lon protease" evidence="1">
    <location>
        <position position="168"/>
    </location>
</feature>
<gene>
    <name evidence="1" type="primary">sulA</name>
    <name type="ordered locus">YE1582</name>
</gene>